<protein>
    <recommendedName>
        <fullName evidence="1">Phosphopantetheine adenylyltransferase</fullName>
        <ecNumber evidence="1">2.7.7.3</ecNumber>
    </recommendedName>
    <alternativeName>
        <fullName evidence="1">Dephospho-CoA pyrophosphorylase</fullName>
    </alternativeName>
    <alternativeName>
        <fullName evidence="1">Pantetheine-phosphate adenylyltransferase</fullName>
        <shortName evidence="1">PPAT</shortName>
    </alternativeName>
</protein>
<comment type="function">
    <text evidence="1">Reversibly transfers an adenylyl group from ATP to 4'-phosphopantetheine, yielding dephospho-CoA (dPCoA) and pyrophosphate.</text>
</comment>
<comment type="catalytic activity">
    <reaction evidence="1">
        <text>(R)-4'-phosphopantetheine + ATP + H(+) = 3'-dephospho-CoA + diphosphate</text>
        <dbReference type="Rhea" id="RHEA:19801"/>
        <dbReference type="ChEBI" id="CHEBI:15378"/>
        <dbReference type="ChEBI" id="CHEBI:30616"/>
        <dbReference type="ChEBI" id="CHEBI:33019"/>
        <dbReference type="ChEBI" id="CHEBI:57328"/>
        <dbReference type="ChEBI" id="CHEBI:61723"/>
        <dbReference type="EC" id="2.7.7.3"/>
    </reaction>
</comment>
<comment type="cofactor">
    <cofactor evidence="1">
        <name>Mg(2+)</name>
        <dbReference type="ChEBI" id="CHEBI:18420"/>
    </cofactor>
</comment>
<comment type="pathway">
    <text evidence="1">Cofactor biosynthesis; coenzyme A biosynthesis; CoA from (R)-pantothenate: step 4/5.</text>
</comment>
<comment type="subunit">
    <text evidence="1">Homohexamer.</text>
</comment>
<comment type="subcellular location">
    <subcellularLocation>
        <location evidence="1">Cytoplasm</location>
    </subcellularLocation>
</comment>
<comment type="similarity">
    <text evidence="1">Belongs to the bacterial CoaD family.</text>
</comment>
<feature type="chain" id="PRO_1000011094" description="Phosphopantetheine adenylyltransferase">
    <location>
        <begin position="1"/>
        <end position="164"/>
    </location>
</feature>
<feature type="binding site" evidence="1">
    <location>
        <begin position="10"/>
        <end position="11"/>
    </location>
    <ligand>
        <name>ATP</name>
        <dbReference type="ChEBI" id="CHEBI:30616"/>
    </ligand>
</feature>
<feature type="binding site" evidence="1">
    <location>
        <position position="10"/>
    </location>
    <ligand>
        <name>substrate</name>
    </ligand>
</feature>
<feature type="binding site" evidence="1">
    <location>
        <position position="18"/>
    </location>
    <ligand>
        <name>ATP</name>
        <dbReference type="ChEBI" id="CHEBI:30616"/>
    </ligand>
</feature>
<feature type="binding site" evidence="1">
    <location>
        <position position="42"/>
    </location>
    <ligand>
        <name>substrate</name>
    </ligand>
</feature>
<feature type="binding site" evidence="1">
    <location>
        <position position="74"/>
    </location>
    <ligand>
        <name>substrate</name>
    </ligand>
</feature>
<feature type="binding site" evidence="1">
    <location>
        <position position="88"/>
    </location>
    <ligand>
        <name>substrate</name>
    </ligand>
</feature>
<feature type="binding site" evidence="1">
    <location>
        <begin position="89"/>
        <end position="91"/>
    </location>
    <ligand>
        <name>ATP</name>
        <dbReference type="ChEBI" id="CHEBI:30616"/>
    </ligand>
</feature>
<feature type="binding site" evidence="1">
    <location>
        <position position="99"/>
    </location>
    <ligand>
        <name>ATP</name>
        <dbReference type="ChEBI" id="CHEBI:30616"/>
    </ligand>
</feature>
<feature type="binding site" evidence="1">
    <location>
        <begin position="124"/>
        <end position="130"/>
    </location>
    <ligand>
        <name>ATP</name>
        <dbReference type="ChEBI" id="CHEBI:30616"/>
    </ligand>
</feature>
<feature type="site" description="Transition state stabilizer" evidence="1">
    <location>
        <position position="18"/>
    </location>
</feature>
<proteinExistence type="inferred from homology"/>
<sequence length="164" mass="18368">MASIAVCPGSFDPVTFGHLDIIRRGAKVFDKVYVCVLNNSSKKPLFTVEERCGLLREVTQDIPNVQVESFQGLLIDYAKSKQANVILRGLRAVSDFEYEMQGTSMNKVLDENIETFFMMTNNQYSFLSSSIVKEVAKYKGSVAELVPEAVEAALEKKFAKNERP</sequence>
<accession>Q65JZ9</accession>
<accession>Q62VF0</accession>
<reference key="1">
    <citation type="journal article" date="2004" name="J. Mol. Microbiol. Biotechnol.">
        <title>The complete genome sequence of Bacillus licheniformis DSM13, an organism with great industrial potential.</title>
        <authorList>
            <person name="Veith B."/>
            <person name="Herzberg C."/>
            <person name="Steckel S."/>
            <person name="Feesche J."/>
            <person name="Maurer K.H."/>
            <person name="Ehrenreich P."/>
            <person name="Baeumer S."/>
            <person name="Henne A."/>
            <person name="Liesegang H."/>
            <person name="Merkl R."/>
            <person name="Ehrenreich A."/>
            <person name="Gottschalk G."/>
        </authorList>
    </citation>
    <scope>NUCLEOTIDE SEQUENCE [LARGE SCALE GENOMIC DNA]</scope>
    <source>
        <strain>ATCC 14580 / DSM 13 / JCM 2505 / CCUG 7422 / NBRC 12200 / NCIMB 9375 / NCTC 10341 / NRRL NRS-1264 / Gibson 46</strain>
    </source>
</reference>
<reference key="2">
    <citation type="journal article" date="2004" name="Genome Biol.">
        <title>Complete genome sequence of the industrial bacterium Bacillus licheniformis and comparisons with closely related Bacillus species.</title>
        <authorList>
            <person name="Rey M.W."/>
            <person name="Ramaiya P."/>
            <person name="Nelson B.A."/>
            <person name="Brody-Karpin S.D."/>
            <person name="Zaretsky E.J."/>
            <person name="Tang M."/>
            <person name="Lopez de Leon A."/>
            <person name="Xiang H."/>
            <person name="Gusti V."/>
            <person name="Clausen I.G."/>
            <person name="Olsen P.B."/>
            <person name="Rasmussen M.D."/>
            <person name="Andersen J.T."/>
            <person name="Joergensen P.L."/>
            <person name="Larsen T.S."/>
            <person name="Sorokin A."/>
            <person name="Bolotin A."/>
            <person name="Lapidus A."/>
            <person name="Galleron N."/>
            <person name="Ehrlich S.D."/>
            <person name="Berka R.M."/>
        </authorList>
    </citation>
    <scope>NUCLEOTIDE SEQUENCE [LARGE SCALE GENOMIC DNA]</scope>
    <source>
        <strain>ATCC 14580 / DSM 13 / JCM 2505 / CCUG 7422 / NBRC 12200 / NCIMB 9375 / NCTC 10341 / NRRL NRS-1264 / Gibson 46</strain>
    </source>
</reference>
<dbReference type="EC" id="2.7.7.3" evidence="1"/>
<dbReference type="EMBL" id="CP000002">
    <property type="protein sequence ID" value="AAU23258.1"/>
    <property type="molecule type" value="Genomic_DNA"/>
</dbReference>
<dbReference type="EMBL" id="AE017333">
    <property type="protein sequence ID" value="AAU40615.1"/>
    <property type="molecule type" value="Genomic_DNA"/>
</dbReference>
<dbReference type="RefSeq" id="WP_003181508.1">
    <property type="nucleotide sequence ID" value="NC_006322.1"/>
</dbReference>
<dbReference type="SMR" id="Q65JZ9"/>
<dbReference type="STRING" id="279010.BL02991"/>
<dbReference type="GeneID" id="92861686"/>
<dbReference type="KEGG" id="bld:BLi01719"/>
<dbReference type="KEGG" id="bli:BL02991"/>
<dbReference type="eggNOG" id="COG0669">
    <property type="taxonomic scope" value="Bacteria"/>
</dbReference>
<dbReference type="HOGENOM" id="CLU_100149_0_1_9"/>
<dbReference type="UniPathway" id="UPA00241">
    <property type="reaction ID" value="UER00355"/>
</dbReference>
<dbReference type="Proteomes" id="UP000000606">
    <property type="component" value="Chromosome"/>
</dbReference>
<dbReference type="GO" id="GO:0005737">
    <property type="term" value="C:cytoplasm"/>
    <property type="evidence" value="ECO:0007669"/>
    <property type="project" value="UniProtKB-SubCell"/>
</dbReference>
<dbReference type="GO" id="GO:0005524">
    <property type="term" value="F:ATP binding"/>
    <property type="evidence" value="ECO:0007669"/>
    <property type="project" value="UniProtKB-KW"/>
</dbReference>
<dbReference type="GO" id="GO:0004595">
    <property type="term" value="F:pantetheine-phosphate adenylyltransferase activity"/>
    <property type="evidence" value="ECO:0007669"/>
    <property type="project" value="UniProtKB-UniRule"/>
</dbReference>
<dbReference type="GO" id="GO:0015937">
    <property type="term" value="P:coenzyme A biosynthetic process"/>
    <property type="evidence" value="ECO:0007669"/>
    <property type="project" value="UniProtKB-UniRule"/>
</dbReference>
<dbReference type="CDD" id="cd02163">
    <property type="entry name" value="PPAT"/>
    <property type="match status" value="1"/>
</dbReference>
<dbReference type="FunFam" id="3.40.50.620:FF:000012">
    <property type="entry name" value="Phosphopantetheine adenylyltransferase"/>
    <property type="match status" value="1"/>
</dbReference>
<dbReference type="Gene3D" id="3.40.50.620">
    <property type="entry name" value="HUPs"/>
    <property type="match status" value="1"/>
</dbReference>
<dbReference type="HAMAP" id="MF_00151">
    <property type="entry name" value="PPAT_bact"/>
    <property type="match status" value="1"/>
</dbReference>
<dbReference type="InterPro" id="IPR004821">
    <property type="entry name" value="Cyt_trans-like"/>
</dbReference>
<dbReference type="InterPro" id="IPR001980">
    <property type="entry name" value="PPAT"/>
</dbReference>
<dbReference type="InterPro" id="IPR014729">
    <property type="entry name" value="Rossmann-like_a/b/a_fold"/>
</dbReference>
<dbReference type="NCBIfam" id="TIGR01510">
    <property type="entry name" value="coaD_prev_kdtB"/>
    <property type="match status" value="1"/>
</dbReference>
<dbReference type="NCBIfam" id="TIGR00125">
    <property type="entry name" value="cyt_tran_rel"/>
    <property type="match status" value="1"/>
</dbReference>
<dbReference type="PANTHER" id="PTHR21342">
    <property type="entry name" value="PHOSPHOPANTETHEINE ADENYLYLTRANSFERASE"/>
    <property type="match status" value="1"/>
</dbReference>
<dbReference type="PANTHER" id="PTHR21342:SF1">
    <property type="entry name" value="PHOSPHOPANTETHEINE ADENYLYLTRANSFERASE"/>
    <property type="match status" value="1"/>
</dbReference>
<dbReference type="Pfam" id="PF01467">
    <property type="entry name" value="CTP_transf_like"/>
    <property type="match status" value="1"/>
</dbReference>
<dbReference type="PRINTS" id="PR01020">
    <property type="entry name" value="LPSBIOSNTHSS"/>
</dbReference>
<dbReference type="SUPFAM" id="SSF52374">
    <property type="entry name" value="Nucleotidylyl transferase"/>
    <property type="match status" value="1"/>
</dbReference>
<gene>
    <name evidence="1" type="primary">coaD</name>
    <name type="ordered locus">BLi01719</name>
    <name type="ordered locus">BL02991</name>
</gene>
<keyword id="KW-0067">ATP-binding</keyword>
<keyword id="KW-0173">Coenzyme A biosynthesis</keyword>
<keyword id="KW-0963">Cytoplasm</keyword>
<keyword id="KW-0460">Magnesium</keyword>
<keyword id="KW-0547">Nucleotide-binding</keyword>
<keyword id="KW-0548">Nucleotidyltransferase</keyword>
<keyword id="KW-1185">Reference proteome</keyword>
<keyword id="KW-0808">Transferase</keyword>
<name>COAD_BACLD</name>
<evidence type="ECO:0000255" key="1">
    <source>
        <dbReference type="HAMAP-Rule" id="MF_00151"/>
    </source>
</evidence>
<organism>
    <name type="scientific">Bacillus licheniformis (strain ATCC 14580 / DSM 13 / JCM 2505 / CCUG 7422 / NBRC 12200 / NCIMB 9375 / NCTC 10341 / NRRL NRS-1264 / Gibson 46)</name>
    <dbReference type="NCBI Taxonomy" id="279010"/>
    <lineage>
        <taxon>Bacteria</taxon>
        <taxon>Bacillati</taxon>
        <taxon>Bacillota</taxon>
        <taxon>Bacilli</taxon>
        <taxon>Bacillales</taxon>
        <taxon>Bacillaceae</taxon>
        <taxon>Bacillus</taxon>
    </lineage>
</organism>